<reference key="1">
    <citation type="journal article" date="2008" name="J. Bacteriol.">
        <title>The complete genome sequence of Escherichia coli DH10B: insights into the biology of a laboratory workhorse.</title>
        <authorList>
            <person name="Durfee T."/>
            <person name="Nelson R."/>
            <person name="Baldwin S."/>
            <person name="Plunkett G. III"/>
            <person name="Burland V."/>
            <person name="Mau B."/>
            <person name="Petrosino J.F."/>
            <person name="Qin X."/>
            <person name="Muzny D.M."/>
            <person name="Ayele M."/>
            <person name="Gibbs R.A."/>
            <person name="Csorgo B."/>
            <person name="Posfai G."/>
            <person name="Weinstock G.M."/>
            <person name="Blattner F.R."/>
        </authorList>
    </citation>
    <scope>NUCLEOTIDE SEQUENCE [LARGE SCALE GENOMIC DNA]</scope>
    <source>
        <strain>K12 / DH10B</strain>
    </source>
</reference>
<dbReference type="EMBL" id="CP000948">
    <property type="protein sequence ID" value="ACB01206.1"/>
    <property type="molecule type" value="Genomic_DNA"/>
</dbReference>
<dbReference type="RefSeq" id="WP_001386572.1">
    <property type="nucleotide sequence ID" value="NC_010473.1"/>
</dbReference>
<dbReference type="GeneID" id="93777441"/>
<dbReference type="KEGG" id="ecd:ECDH10B_0001"/>
<dbReference type="HOGENOM" id="CLU_221491_0_1_6"/>
<dbReference type="GO" id="GO:0009088">
    <property type="term" value="P:threonine biosynthetic process"/>
    <property type="evidence" value="ECO:0007669"/>
    <property type="project" value="UniProtKB-UniRule"/>
</dbReference>
<dbReference type="GO" id="GO:0031556">
    <property type="term" value="P:transcriptional attenuation by ribosome"/>
    <property type="evidence" value="ECO:0007669"/>
    <property type="project" value="UniProtKB-UniRule"/>
</dbReference>
<dbReference type="HAMAP" id="MF_01907">
    <property type="entry name" value="Leader_Thr"/>
    <property type="match status" value="1"/>
</dbReference>
<dbReference type="InterPro" id="IPR011720">
    <property type="entry name" value="Thr_lead_pept"/>
</dbReference>
<dbReference type="NCBIfam" id="NF007329">
    <property type="entry name" value="PRK09816.1"/>
    <property type="match status" value="1"/>
</dbReference>
<dbReference type="NCBIfam" id="TIGR02077">
    <property type="entry name" value="thr_lead_pep"/>
    <property type="match status" value="1"/>
</dbReference>
<dbReference type="Pfam" id="PF08254">
    <property type="entry name" value="Leader_Thr"/>
    <property type="match status" value="1"/>
</dbReference>
<accession>B1XBC6</accession>
<evidence type="ECO:0000255" key="1">
    <source>
        <dbReference type="HAMAP-Rule" id="MF_01907"/>
    </source>
</evidence>
<keyword id="KW-0028">Amino-acid biosynthesis</keyword>
<keyword id="KW-0428">Leader peptide</keyword>
<keyword id="KW-0791">Threonine biosynthesis</keyword>
<sequence length="21" mass="2138">MKRISTTITTTITITTGNGAG</sequence>
<protein>
    <recommendedName>
        <fullName evidence="1">thr operon leader peptide</fullName>
    </recommendedName>
    <alternativeName>
        <fullName evidence="1">thr operon attenuator</fullName>
    </alternativeName>
</protein>
<organism>
    <name type="scientific">Escherichia coli (strain K12 / DH10B)</name>
    <dbReference type="NCBI Taxonomy" id="316385"/>
    <lineage>
        <taxon>Bacteria</taxon>
        <taxon>Pseudomonadati</taxon>
        <taxon>Pseudomonadota</taxon>
        <taxon>Gammaproteobacteria</taxon>
        <taxon>Enterobacterales</taxon>
        <taxon>Enterobacteriaceae</taxon>
        <taxon>Escherichia</taxon>
    </lineage>
</organism>
<proteinExistence type="inferred from homology"/>
<feature type="peptide" id="PRO_1000188776" description="thr operon leader peptide">
    <location>
        <begin position="1"/>
        <end position="21"/>
    </location>
</feature>
<name>LPT_ECODH</name>
<comment type="function">
    <text evidence="1">This protein is involved in control of the biosynthesis of threonine.</text>
</comment>
<comment type="similarity">
    <text evidence="1">Belongs to the thr operon leader peptide family.</text>
</comment>
<gene>
    <name evidence="1" type="primary">thrL</name>
    <name type="ordered locus">ECDH10B_0001</name>
</gene>